<dbReference type="EMBL" id="AE014134">
    <property type="protein sequence ID" value="ABV53662.1"/>
    <property type="molecule type" value="Genomic_DNA"/>
</dbReference>
<dbReference type="RefSeq" id="NP_001097139.1">
    <property type="nucleotide sequence ID" value="NM_001103669.2"/>
</dbReference>
<dbReference type="SMR" id="A8DYY6"/>
<dbReference type="FunCoup" id="A8DYY6">
    <property type="interactions" value="1"/>
</dbReference>
<dbReference type="STRING" id="7227.FBpp0402895"/>
<dbReference type="PaxDb" id="7227-FBpp0111946"/>
<dbReference type="EnsemblMetazoa" id="FBtr0113033">
    <property type="protein sequence ID" value="FBpp0111946"/>
    <property type="gene ID" value="FBgn0032221"/>
</dbReference>
<dbReference type="GeneID" id="34393"/>
<dbReference type="KEGG" id="dme:Dmel_CG5375"/>
<dbReference type="UCSC" id="CG5375-RB">
    <property type="organism name" value="d. melanogaster"/>
</dbReference>
<dbReference type="AGR" id="FB:FBgn0032221"/>
<dbReference type="CTD" id="29970"/>
<dbReference type="FlyBase" id="FBgn0032221">
    <property type="gene designation" value="Schip1"/>
</dbReference>
<dbReference type="VEuPathDB" id="VectorBase:FBgn0032221"/>
<dbReference type="eggNOG" id="KOG4847">
    <property type="taxonomic scope" value="Eukaryota"/>
</dbReference>
<dbReference type="GeneTree" id="ENSGT00390000011127"/>
<dbReference type="HOGENOM" id="CLU_444300_0_0_1"/>
<dbReference type="InParanoid" id="A8DYY6"/>
<dbReference type="OMA" id="YKVANDM"/>
<dbReference type="OrthoDB" id="6260144at2759"/>
<dbReference type="PhylomeDB" id="A8DYY6"/>
<dbReference type="BioGRID-ORCS" id="34393">
    <property type="hits" value="0 hits in 3 CRISPR screens"/>
</dbReference>
<dbReference type="GenomeRNAi" id="34393"/>
<dbReference type="PRO" id="PR:A8DYY6"/>
<dbReference type="Proteomes" id="UP000000803">
    <property type="component" value="Chromosome 2L"/>
</dbReference>
<dbReference type="Bgee" id="FBgn0032221">
    <property type="expression patterns" value="Expressed in adult gamma Kenyon cell in brain and 99 other cell types or tissues"/>
</dbReference>
<dbReference type="ExpressionAtlas" id="A8DYY6">
    <property type="expression patterns" value="baseline and differential"/>
</dbReference>
<dbReference type="GO" id="GO:0005912">
    <property type="term" value="C:adherens junction"/>
    <property type="evidence" value="ECO:0000314"/>
    <property type="project" value="UniProtKB"/>
</dbReference>
<dbReference type="GO" id="GO:0016324">
    <property type="term" value="C:apical plasma membrane"/>
    <property type="evidence" value="ECO:0000314"/>
    <property type="project" value="UniProtKB"/>
</dbReference>
<dbReference type="GO" id="GO:0030054">
    <property type="term" value="C:cell junction"/>
    <property type="evidence" value="ECO:0000318"/>
    <property type="project" value="GO_Central"/>
</dbReference>
<dbReference type="GO" id="GO:0005886">
    <property type="term" value="C:plasma membrane"/>
    <property type="evidence" value="ECO:0000318"/>
    <property type="project" value="GO_Central"/>
</dbReference>
<dbReference type="GO" id="GO:0045926">
    <property type="term" value="P:negative regulation of growth"/>
    <property type="evidence" value="ECO:0000315"/>
    <property type="project" value="FlyBase"/>
</dbReference>
<dbReference type="GO" id="GO:0035332">
    <property type="term" value="P:positive regulation of hippo signaling"/>
    <property type="evidence" value="ECO:0000315"/>
    <property type="project" value="UniProtKB"/>
</dbReference>
<dbReference type="GO" id="GO:0071902">
    <property type="term" value="P:positive regulation of protein serine/threonine kinase activity"/>
    <property type="evidence" value="ECO:0000315"/>
    <property type="project" value="UniProtKB"/>
</dbReference>
<dbReference type="InterPro" id="IPR039045">
    <property type="entry name" value="SCHIP_1"/>
</dbReference>
<dbReference type="InterPro" id="IPR015649">
    <property type="entry name" value="SCHIP_1_C"/>
</dbReference>
<dbReference type="PANTHER" id="PTHR13103:SF2">
    <property type="entry name" value="IQCJ-SCHIP1 READTHROUGH TRANSCRIPT PROTEIN-RELATED"/>
    <property type="match status" value="1"/>
</dbReference>
<dbReference type="PANTHER" id="PTHR13103">
    <property type="entry name" value="SCHWANNOMIN INTERACTING PROTEIN 1"/>
    <property type="match status" value="1"/>
</dbReference>
<dbReference type="Pfam" id="PF10148">
    <property type="entry name" value="SCHIP-1_C"/>
    <property type="match status" value="1"/>
</dbReference>
<reference evidence="7" key="1">
    <citation type="journal article" date="2000" name="Science">
        <title>The genome sequence of Drosophila melanogaster.</title>
        <authorList>
            <person name="Adams M.D."/>
            <person name="Celniker S.E."/>
            <person name="Holt R.A."/>
            <person name="Evans C.A."/>
            <person name="Gocayne J.D."/>
            <person name="Amanatides P.G."/>
            <person name="Scherer S.E."/>
            <person name="Li P.W."/>
            <person name="Hoskins R.A."/>
            <person name="Galle R.F."/>
            <person name="George R.A."/>
            <person name="Lewis S.E."/>
            <person name="Richards S."/>
            <person name="Ashburner M."/>
            <person name="Henderson S.N."/>
            <person name="Sutton G.G."/>
            <person name="Wortman J.R."/>
            <person name="Yandell M.D."/>
            <person name="Zhang Q."/>
            <person name="Chen L.X."/>
            <person name="Brandon R.C."/>
            <person name="Rogers Y.-H.C."/>
            <person name="Blazej R.G."/>
            <person name="Champe M."/>
            <person name="Pfeiffer B.D."/>
            <person name="Wan K.H."/>
            <person name="Doyle C."/>
            <person name="Baxter E.G."/>
            <person name="Helt G."/>
            <person name="Nelson C.R."/>
            <person name="Miklos G.L.G."/>
            <person name="Abril J.F."/>
            <person name="Agbayani A."/>
            <person name="An H.-J."/>
            <person name="Andrews-Pfannkoch C."/>
            <person name="Baldwin D."/>
            <person name="Ballew R.M."/>
            <person name="Basu A."/>
            <person name="Baxendale J."/>
            <person name="Bayraktaroglu L."/>
            <person name="Beasley E.M."/>
            <person name="Beeson K.Y."/>
            <person name="Benos P.V."/>
            <person name="Berman B.P."/>
            <person name="Bhandari D."/>
            <person name="Bolshakov S."/>
            <person name="Borkova D."/>
            <person name="Botchan M.R."/>
            <person name="Bouck J."/>
            <person name="Brokstein P."/>
            <person name="Brottier P."/>
            <person name="Burtis K.C."/>
            <person name="Busam D.A."/>
            <person name="Butler H."/>
            <person name="Cadieu E."/>
            <person name="Center A."/>
            <person name="Chandra I."/>
            <person name="Cherry J.M."/>
            <person name="Cawley S."/>
            <person name="Dahlke C."/>
            <person name="Davenport L.B."/>
            <person name="Davies P."/>
            <person name="de Pablos B."/>
            <person name="Delcher A."/>
            <person name="Deng Z."/>
            <person name="Mays A.D."/>
            <person name="Dew I."/>
            <person name="Dietz S.M."/>
            <person name="Dodson K."/>
            <person name="Doup L.E."/>
            <person name="Downes M."/>
            <person name="Dugan-Rocha S."/>
            <person name="Dunkov B.C."/>
            <person name="Dunn P."/>
            <person name="Durbin K.J."/>
            <person name="Evangelista C.C."/>
            <person name="Ferraz C."/>
            <person name="Ferriera S."/>
            <person name="Fleischmann W."/>
            <person name="Fosler C."/>
            <person name="Gabrielian A.E."/>
            <person name="Garg N.S."/>
            <person name="Gelbart W.M."/>
            <person name="Glasser K."/>
            <person name="Glodek A."/>
            <person name="Gong F."/>
            <person name="Gorrell J.H."/>
            <person name="Gu Z."/>
            <person name="Guan P."/>
            <person name="Harris M."/>
            <person name="Harris N.L."/>
            <person name="Harvey D.A."/>
            <person name="Heiman T.J."/>
            <person name="Hernandez J.R."/>
            <person name="Houck J."/>
            <person name="Hostin D."/>
            <person name="Houston K.A."/>
            <person name="Howland T.J."/>
            <person name="Wei M.-H."/>
            <person name="Ibegwam C."/>
            <person name="Jalali M."/>
            <person name="Kalush F."/>
            <person name="Karpen G.H."/>
            <person name="Ke Z."/>
            <person name="Kennison J.A."/>
            <person name="Ketchum K.A."/>
            <person name="Kimmel B.E."/>
            <person name="Kodira C.D."/>
            <person name="Kraft C.L."/>
            <person name="Kravitz S."/>
            <person name="Kulp D."/>
            <person name="Lai Z."/>
            <person name="Lasko P."/>
            <person name="Lei Y."/>
            <person name="Levitsky A.A."/>
            <person name="Li J.H."/>
            <person name="Li Z."/>
            <person name="Liang Y."/>
            <person name="Lin X."/>
            <person name="Liu X."/>
            <person name="Mattei B."/>
            <person name="McIntosh T.C."/>
            <person name="McLeod M.P."/>
            <person name="McPherson D."/>
            <person name="Merkulov G."/>
            <person name="Milshina N.V."/>
            <person name="Mobarry C."/>
            <person name="Morris J."/>
            <person name="Moshrefi A."/>
            <person name="Mount S.M."/>
            <person name="Moy M."/>
            <person name="Murphy B."/>
            <person name="Murphy L."/>
            <person name="Muzny D.M."/>
            <person name="Nelson D.L."/>
            <person name="Nelson D.R."/>
            <person name="Nelson K.A."/>
            <person name="Nixon K."/>
            <person name="Nusskern D.R."/>
            <person name="Pacleb J.M."/>
            <person name="Palazzolo M."/>
            <person name="Pittman G.S."/>
            <person name="Pan S."/>
            <person name="Pollard J."/>
            <person name="Puri V."/>
            <person name="Reese M.G."/>
            <person name="Reinert K."/>
            <person name="Remington K."/>
            <person name="Saunders R.D.C."/>
            <person name="Scheeler F."/>
            <person name="Shen H."/>
            <person name="Shue B.C."/>
            <person name="Siden-Kiamos I."/>
            <person name="Simpson M."/>
            <person name="Skupski M.P."/>
            <person name="Smith T.J."/>
            <person name="Spier E."/>
            <person name="Spradling A.C."/>
            <person name="Stapleton M."/>
            <person name="Strong R."/>
            <person name="Sun E."/>
            <person name="Svirskas R."/>
            <person name="Tector C."/>
            <person name="Turner R."/>
            <person name="Venter E."/>
            <person name="Wang A.H."/>
            <person name="Wang X."/>
            <person name="Wang Z.-Y."/>
            <person name="Wassarman D.A."/>
            <person name="Weinstock G.M."/>
            <person name="Weissenbach J."/>
            <person name="Williams S.M."/>
            <person name="Woodage T."/>
            <person name="Worley K.C."/>
            <person name="Wu D."/>
            <person name="Yang S."/>
            <person name="Yao Q.A."/>
            <person name="Ye J."/>
            <person name="Yeh R.-F."/>
            <person name="Zaveri J.S."/>
            <person name="Zhan M."/>
            <person name="Zhang G."/>
            <person name="Zhao Q."/>
            <person name="Zheng L."/>
            <person name="Zheng X.H."/>
            <person name="Zhong F.N."/>
            <person name="Zhong W."/>
            <person name="Zhou X."/>
            <person name="Zhu S.C."/>
            <person name="Zhu X."/>
            <person name="Smith H.O."/>
            <person name="Gibbs R.A."/>
            <person name="Myers E.W."/>
            <person name="Rubin G.M."/>
            <person name="Venter J.C."/>
        </authorList>
    </citation>
    <scope>NUCLEOTIDE SEQUENCE [LARGE SCALE GENOMIC DNA]</scope>
    <source>
        <strain evidence="7">Berkeley</strain>
    </source>
</reference>
<reference evidence="7" key="2">
    <citation type="journal article" date="2002" name="Genome Biol.">
        <title>Annotation of the Drosophila melanogaster euchromatic genome: a systematic review.</title>
        <authorList>
            <person name="Misra S."/>
            <person name="Crosby M.A."/>
            <person name="Mungall C.J."/>
            <person name="Matthews B.B."/>
            <person name="Campbell K.S."/>
            <person name="Hradecky P."/>
            <person name="Huang Y."/>
            <person name="Kaminker J.S."/>
            <person name="Millburn G.H."/>
            <person name="Prochnik S.E."/>
            <person name="Smith C.D."/>
            <person name="Tupy J.L."/>
            <person name="Whitfield E.J."/>
            <person name="Bayraktaroglu L."/>
            <person name="Berman B.P."/>
            <person name="Bettencourt B.R."/>
            <person name="Celniker S.E."/>
            <person name="de Grey A.D.N.J."/>
            <person name="Drysdale R.A."/>
            <person name="Harris N.L."/>
            <person name="Richter J."/>
            <person name="Russo S."/>
            <person name="Schroeder A.J."/>
            <person name="Shu S.Q."/>
            <person name="Stapleton M."/>
            <person name="Yamada C."/>
            <person name="Ashburner M."/>
            <person name="Gelbart W.M."/>
            <person name="Rubin G.M."/>
            <person name="Lewis S.E."/>
        </authorList>
    </citation>
    <scope>GENOME REANNOTATION</scope>
    <source>
        <strain evidence="7">Berkeley</strain>
    </source>
</reference>
<reference evidence="5" key="3">
    <citation type="journal article" date="2016" name="Dev. Cell">
        <title>Drosophila Schip1 links Expanded and Tao-1 to regulate hippo signaling.</title>
        <authorList>
            <person name="Chung H.L."/>
            <person name="Augustine G.J."/>
            <person name="Choi K.W."/>
        </authorList>
    </citation>
    <scope>FUNCTION</scope>
    <scope>INTERACTION WITH EX; MER AND TAO</scope>
    <scope>SUBCELLULAR LOCATION</scope>
    <scope>TISSUE SPECIFICITY</scope>
    <scope>DISRUPTION PHENOTYPE</scope>
</reference>
<proteinExistence type="evidence at protein level"/>
<gene>
    <name evidence="4" type="primary">Schip1</name>
    <name evidence="6" type="ORF">CG5375</name>
</gene>
<comment type="function">
    <text evidence="3">Regulator of the Hippo/SWH (Sav/Wts/Hpo) signaling pathway, a signaling pathway that plays a pivotal role in organ size control and tumor suppression by restricting proliferation and promoting apoptosis. The core of this pathway is composed of a kinase cascade wherein Hippo (hpo), in complex with its regulatory protein Salvador (sav), phosphorylates and activates Warts (wts) in complex with its regulatory protein Mats, which in turn phosphorylates and inactivates the Yorkie (yki) oncoprotein. Schip1 promotes kinase activity of Tao and enhances phosphorylation of hpo by Tao.</text>
</comment>
<comment type="subunit">
    <text evidence="3">Interacts with ex; the interaction results in recruitment of Schip1 to the apical cell membrane. Interacts with Tao; the interaction enhances Tao kinase activity. Interacts with Mer.</text>
</comment>
<comment type="subcellular location">
    <subcellularLocation>
        <location evidence="3">Cell junction</location>
        <location evidence="3">Adherens junction</location>
    </subcellularLocation>
    <subcellularLocation>
        <location evidence="3">Apical cell membrane</location>
        <topology evidence="5">Peripheral membrane protein</topology>
    </subcellularLocation>
</comment>
<comment type="tissue specificity">
    <text evidence="3">In eye disks of the third instar larvae, expressed in all cells (at protein level).</text>
</comment>
<comment type="disruption phenotype">
    <text evidence="3">Death during embryonic or early larval stages. Inactivation in adult eyes results in enlarged eyes with irregular bulging on the surface.</text>
</comment>
<comment type="similarity">
    <text evidence="5">Belongs to the SCHIP1 family.</text>
</comment>
<feature type="chain" id="PRO_0000436305" description="Schwannomin-interacting protein 1 homolog" evidence="5">
    <location>
        <begin position="1"/>
        <end position="616"/>
    </location>
</feature>
<feature type="region of interest" description="Disordered" evidence="2">
    <location>
        <begin position="38"/>
        <end position="71"/>
    </location>
</feature>
<feature type="region of interest" description="Disordered" evidence="2">
    <location>
        <begin position="204"/>
        <end position="251"/>
    </location>
</feature>
<feature type="region of interest" description="Disordered" evidence="2">
    <location>
        <begin position="292"/>
        <end position="320"/>
    </location>
</feature>
<feature type="coiled-coil region" evidence="1">
    <location>
        <begin position="550"/>
        <end position="594"/>
    </location>
</feature>
<feature type="compositionally biased region" description="Acidic residues" evidence="2">
    <location>
        <begin position="38"/>
        <end position="50"/>
    </location>
</feature>
<feature type="compositionally biased region" description="Polar residues" evidence="2">
    <location>
        <begin position="62"/>
        <end position="71"/>
    </location>
</feature>
<feature type="compositionally biased region" description="Polar residues" evidence="2">
    <location>
        <begin position="204"/>
        <end position="217"/>
    </location>
</feature>
<evidence type="ECO:0000255" key="1"/>
<evidence type="ECO:0000256" key="2">
    <source>
        <dbReference type="SAM" id="MobiDB-lite"/>
    </source>
</evidence>
<evidence type="ECO:0000269" key="3">
    <source>
    </source>
</evidence>
<evidence type="ECO:0000303" key="4">
    <source>
    </source>
</evidence>
<evidence type="ECO:0000305" key="5"/>
<evidence type="ECO:0000312" key="6">
    <source>
        <dbReference type="FlyBase" id="FBgn0032221"/>
    </source>
</evidence>
<evidence type="ECO:0000312" key="7">
    <source>
        <dbReference type="Proteomes" id="UP000000803"/>
    </source>
</evidence>
<name>SCHI1_DROME</name>
<sequence>MDIYITKGITNPNYPGFQKFAHTLSDDYIEYSDMECNESDLTDSDREDDPTFPSKMAKESGSETFKNGQDSILSNCDNGNTYISEEESVNRSENIPDIVNENYSATSENSKRALQKPDLIYNLSQNYTTNPEFPSWSCTINSKYEGQLQGQSPIDIVGDFGGEVEREFELLLTGYKNKKEADELKGSNLDKICDAELSNGTEALKQTSSTRLSGNSTRKNKKKNTPYGHQIVKTKHPKPSHDERQLPPDTFDYKTYSQRKYIICDADQYSSVPEKNKNDSPNLNQAEIPNMSSLEIGGSGSQQNLDEDNNKVASRKYSNQSRWSQYLEDPIKYSKDPCSTMVLEQFDAYKIANDMDVETLQNHYKKVKQIEKKRRFNRDEIRKRLAIGDKDSLNNDIKKEEFLTGSDNESYSSDSETCPKLSSGVLRKQSEFCETKRNKEFENDKIFQKNQINQDKSMNHMNGNPIGTTDYPSDENLFFFANQSKLQIEVRIALAQSKEIAQMKVKARKHGVTPIVDVIRSMLCDVGIKMNSNHRWISRQLLTGIQVPTLQLLVNNLQEYIENLNVTLLESLKERDDLNSDQDDILHDLEKINNFFVFQQQSGQQVNKIVRHGHLD</sequence>
<accession>A8DYY6</accession>
<protein>
    <recommendedName>
        <fullName evidence="4">Schwannomin-interacting protein 1 homolog</fullName>
    </recommendedName>
</protein>
<organism evidence="7">
    <name type="scientific">Drosophila melanogaster</name>
    <name type="common">Fruit fly</name>
    <dbReference type="NCBI Taxonomy" id="7227"/>
    <lineage>
        <taxon>Eukaryota</taxon>
        <taxon>Metazoa</taxon>
        <taxon>Ecdysozoa</taxon>
        <taxon>Arthropoda</taxon>
        <taxon>Hexapoda</taxon>
        <taxon>Insecta</taxon>
        <taxon>Pterygota</taxon>
        <taxon>Neoptera</taxon>
        <taxon>Endopterygota</taxon>
        <taxon>Diptera</taxon>
        <taxon>Brachycera</taxon>
        <taxon>Muscomorpha</taxon>
        <taxon>Ephydroidea</taxon>
        <taxon>Drosophilidae</taxon>
        <taxon>Drosophila</taxon>
        <taxon>Sophophora</taxon>
    </lineage>
</organism>
<keyword id="KW-0965">Cell junction</keyword>
<keyword id="KW-1003">Cell membrane</keyword>
<keyword id="KW-0175">Coiled coil</keyword>
<keyword id="KW-0472">Membrane</keyword>
<keyword id="KW-1185">Reference proteome</keyword>